<organism>
    <name type="scientific">Xenopus laevis</name>
    <name type="common">African clawed frog</name>
    <dbReference type="NCBI Taxonomy" id="8355"/>
    <lineage>
        <taxon>Eukaryota</taxon>
        <taxon>Metazoa</taxon>
        <taxon>Chordata</taxon>
        <taxon>Craniata</taxon>
        <taxon>Vertebrata</taxon>
        <taxon>Euteleostomi</taxon>
        <taxon>Amphibia</taxon>
        <taxon>Batrachia</taxon>
        <taxon>Anura</taxon>
        <taxon>Pipoidea</taxon>
        <taxon>Pipidae</taxon>
        <taxon>Xenopodinae</taxon>
        <taxon>Xenopus</taxon>
        <taxon>Xenopus</taxon>
    </lineage>
</organism>
<reference key="1">
    <citation type="submission" date="2004-08" db="EMBL/GenBank/DDBJ databases">
        <authorList>
            <consortium name="NIH - Xenopus Gene Collection (XGC) project"/>
        </authorList>
    </citation>
    <scope>NUCLEOTIDE SEQUENCE [LARGE SCALE MRNA]</scope>
    <source>
        <tissue>Eye</tissue>
    </source>
</reference>
<dbReference type="EMBL" id="BC080110">
    <property type="protein sequence ID" value="AAH80110.1"/>
    <property type="status" value="ALT_SEQ"/>
    <property type="molecule type" value="mRNA"/>
</dbReference>
<dbReference type="RefSeq" id="NP_001087566.2">
    <property type="nucleotide sequence ID" value="NM_001094097.2"/>
</dbReference>
<dbReference type="DNASU" id="447390"/>
<dbReference type="GeneID" id="447390"/>
<dbReference type="KEGG" id="xla:447390"/>
<dbReference type="AGR" id="Xenbase:XB-GENE-1007241"/>
<dbReference type="CTD" id="447390"/>
<dbReference type="Xenbase" id="XB-GENE-1007241">
    <property type="gene designation" value="selenos.S"/>
</dbReference>
<dbReference type="OrthoDB" id="75792at2759"/>
<dbReference type="Proteomes" id="UP000186698">
    <property type="component" value="Chromosome 3S"/>
</dbReference>
<dbReference type="Bgee" id="447390">
    <property type="expression patterns" value="Expressed in pancreas and 19 other cell types or tissues"/>
</dbReference>
<dbReference type="GO" id="GO:0036513">
    <property type="term" value="C:Derlin-1 retrotranslocation complex"/>
    <property type="evidence" value="ECO:0000318"/>
    <property type="project" value="GO_Central"/>
</dbReference>
<dbReference type="GO" id="GO:0036502">
    <property type="term" value="C:Derlin-1-VIMP complex"/>
    <property type="evidence" value="ECO:0000318"/>
    <property type="project" value="GO_Central"/>
</dbReference>
<dbReference type="GO" id="GO:0030968">
    <property type="term" value="P:endoplasmic reticulum unfolded protein response"/>
    <property type="evidence" value="ECO:0000318"/>
    <property type="project" value="GO_Central"/>
</dbReference>
<dbReference type="GO" id="GO:0030970">
    <property type="term" value="P:retrograde protein transport, ER to cytosol"/>
    <property type="evidence" value="ECO:0000318"/>
    <property type="project" value="GO_Central"/>
</dbReference>
<dbReference type="Gene3D" id="6.10.250.2950">
    <property type="match status" value="1"/>
</dbReference>
<dbReference type="InterPro" id="IPR009703">
    <property type="entry name" value="Selenoprotein_S"/>
</dbReference>
<dbReference type="PANTHER" id="PTHR28621">
    <property type="entry name" value="SELENOPROTEIN S"/>
    <property type="match status" value="1"/>
</dbReference>
<dbReference type="PANTHER" id="PTHR28621:SF1">
    <property type="entry name" value="SELENOPROTEIN S"/>
    <property type="match status" value="1"/>
</dbReference>
<dbReference type="Pfam" id="PF06936">
    <property type="entry name" value="Selenoprotein_S"/>
    <property type="match status" value="1"/>
</dbReference>
<feature type="chain" id="PRO_0000318653" description="Selenoprotein S B">
    <location>
        <begin position="1"/>
        <end position="188"/>
    </location>
</feature>
<feature type="transmembrane region" description="Helical" evidence="2">
    <location>
        <begin position="29"/>
        <end position="49"/>
    </location>
</feature>
<feature type="region of interest" description="Disordered" evidence="3">
    <location>
        <begin position="116"/>
        <end position="188"/>
    </location>
</feature>
<feature type="compositionally biased region" description="Basic and acidic residues" evidence="3">
    <location>
        <begin position="116"/>
        <end position="125"/>
    </location>
</feature>
<feature type="compositionally biased region" description="Low complexity" evidence="3">
    <location>
        <begin position="136"/>
        <end position="147"/>
    </location>
</feature>
<feature type="non-standard amino acid" description="Selenocysteine" evidence="1">
    <location>
        <position position="187"/>
    </location>
</feature>
<comment type="function">
    <text evidence="1">Involved in the degradation process of misfolded endoplasmic reticulum (ER) luminal proteins. Participates in the transfer of misfolded proteins from the ER to the cytosol, where they are destroyed by the proteasome in a ubiquitin-dependent manner (By similarity).</text>
</comment>
<comment type="subcellular location">
    <subcellularLocation>
        <location evidence="1">Endoplasmic reticulum membrane</location>
        <topology evidence="1">Single-pass membrane protein</topology>
    </subcellularLocation>
    <subcellularLocation>
        <location evidence="1">Cytoplasm</location>
    </subcellularLocation>
</comment>
<comment type="similarity">
    <text evidence="4">Belongs to the selenoprotein S family.</text>
</comment>
<comment type="sequence caution" evidence="4">
    <conflict type="erroneous termination">
        <sequence resource="EMBL-CDS" id="AAH80110"/>
    </conflict>
    <text>Truncated C-terminus.</text>
</comment>
<keyword id="KW-0963">Cytoplasm</keyword>
<keyword id="KW-0256">Endoplasmic reticulum</keyword>
<keyword id="KW-0472">Membrane</keyword>
<keyword id="KW-1185">Reference proteome</keyword>
<keyword id="KW-0712">Selenocysteine</keyword>
<keyword id="KW-0812">Transmembrane</keyword>
<keyword id="KW-1133">Transmembrane helix</keyword>
<accession>Q68EU0</accession>
<name>SELSB_XENLA</name>
<sequence length="188" mass="20972">MELGNQPGQGNRPEIELEWYQYLQNTVGEALSNYGWYILLGCIVIYFLIQKLSANFTRAVASTRTTVTDPDEIVRRQEAVAAARMRMQVELNAQAELYKQKQVQLQEEKRRRNIETWDRMQEGKSSKVGCRLVQDASPRTSTSSSAPKPKPESRPLRDSGYNPLTGGGGGTCAWRPGRRGPSSGGSUG</sequence>
<evidence type="ECO:0000250" key="1"/>
<evidence type="ECO:0000255" key="2"/>
<evidence type="ECO:0000256" key="3">
    <source>
        <dbReference type="SAM" id="MobiDB-lite"/>
    </source>
</evidence>
<evidence type="ECO:0000305" key="4"/>
<gene>
    <name type="primary">vimp-b</name>
    <name type="synonym">sels-b</name>
</gene>
<proteinExistence type="evidence at transcript level"/>
<protein>
    <recommendedName>
        <fullName>Selenoprotein S B</fullName>
        <shortName>SelS B</shortName>
    </recommendedName>
    <alternativeName>
        <fullName>VCP-interacting membrane protein</fullName>
    </alternativeName>
</protein>